<dbReference type="EC" id="1.1.1.94" evidence="1"/>
<dbReference type="EMBL" id="CP000387">
    <property type="protein sequence ID" value="ABN45535.1"/>
    <property type="molecule type" value="Genomic_DNA"/>
</dbReference>
<dbReference type="RefSeq" id="WP_002899188.1">
    <property type="nucleotide sequence ID" value="NC_009009.1"/>
</dbReference>
<dbReference type="RefSeq" id="YP_001036085.1">
    <property type="nucleotide sequence ID" value="NC_009009.1"/>
</dbReference>
<dbReference type="SMR" id="A3CQT0"/>
<dbReference type="STRING" id="388919.SSA_2168"/>
<dbReference type="KEGG" id="ssa:SSA_2168"/>
<dbReference type="PATRIC" id="fig|388919.9.peg.2054"/>
<dbReference type="eggNOG" id="COG0240">
    <property type="taxonomic scope" value="Bacteria"/>
</dbReference>
<dbReference type="HOGENOM" id="CLU_033449_0_2_9"/>
<dbReference type="OrthoDB" id="9812273at2"/>
<dbReference type="UniPathway" id="UPA00940"/>
<dbReference type="Proteomes" id="UP000002148">
    <property type="component" value="Chromosome"/>
</dbReference>
<dbReference type="GO" id="GO:0005829">
    <property type="term" value="C:cytosol"/>
    <property type="evidence" value="ECO:0007669"/>
    <property type="project" value="TreeGrafter"/>
</dbReference>
<dbReference type="GO" id="GO:0047952">
    <property type="term" value="F:glycerol-3-phosphate dehydrogenase [NAD(P)+] activity"/>
    <property type="evidence" value="ECO:0007669"/>
    <property type="project" value="UniProtKB-UniRule"/>
</dbReference>
<dbReference type="GO" id="GO:0051287">
    <property type="term" value="F:NAD binding"/>
    <property type="evidence" value="ECO:0007669"/>
    <property type="project" value="InterPro"/>
</dbReference>
<dbReference type="GO" id="GO:0005975">
    <property type="term" value="P:carbohydrate metabolic process"/>
    <property type="evidence" value="ECO:0007669"/>
    <property type="project" value="InterPro"/>
</dbReference>
<dbReference type="GO" id="GO:0046167">
    <property type="term" value="P:glycerol-3-phosphate biosynthetic process"/>
    <property type="evidence" value="ECO:0007669"/>
    <property type="project" value="UniProtKB-UniRule"/>
</dbReference>
<dbReference type="GO" id="GO:0046168">
    <property type="term" value="P:glycerol-3-phosphate catabolic process"/>
    <property type="evidence" value="ECO:0007669"/>
    <property type="project" value="InterPro"/>
</dbReference>
<dbReference type="GO" id="GO:0006650">
    <property type="term" value="P:glycerophospholipid metabolic process"/>
    <property type="evidence" value="ECO:0007669"/>
    <property type="project" value="UniProtKB-UniRule"/>
</dbReference>
<dbReference type="GO" id="GO:0008654">
    <property type="term" value="P:phospholipid biosynthetic process"/>
    <property type="evidence" value="ECO:0007669"/>
    <property type="project" value="UniProtKB-KW"/>
</dbReference>
<dbReference type="FunFam" id="1.10.1040.10:FF:000001">
    <property type="entry name" value="Glycerol-3-phosphate dehydrogenase [NAD(P)+]"/>
    <property type="match status" value="1"/>
</dbReference>
<dbReference type="FunFam" id="3.40.50.720:FF:000019">
    <property type="entry name" value="Glycerol-3-phosphate dehydrogenase [NAD(P)+]"/>
    <property type="match status" value="1"/>
</dbReference>
<dbReference type="Gene3D" id="1.10.1040.10">
    <property type="entry name" value="N-(1-d-carboxylethyl)-l-norvaline Dehydrogenase, domain 2"/>
    <property type="match status" value="1"/>
</dbReference>
<dbReference type="Gene3D" id="3.40.50.720">
    <property type="entry name" value="NAD(P)-binding Rossmann-like Domain"/>
    <property type="match status" value="1"/>
</dbReference>
<dbReference type="HAMAP" id="MF_00394">
    <property type="entry name" value="NAD_Glyc3P_dehydrog"/>
    <property type="match status" value="1"/>
</dbReference>
<dbReference type="InterPro" id="IPR008927">
    <property type="entry name" value="6-PGluconate_DH-like_C_sf"/>
</dbReference>
<dbReference type="InterPro" id="IPR013328">
    <property type="entry name" value="6PGD_dom2"/>
</dbReference>
<dbReference type="InterPro" id="IPR006168">
    <property type="entry name" value="G3P_DH_NAD-dep"/>
</dbReference>
<dbReference type="InterPro" id="IPR006109">
    <property type="entry name" value="G3P_DH_NAD-dep_C"/>
</dbReference>
<dbReference type="InterPro" id="IPR011128">
    <property type="entry name" value="G3P_DH_NAD-dep_N"/>
</dbReference>
<dbReference type="InterPro" id="IPR036291">
    <property type="entry name" value="NAD(P)-bd_dom_sf"/>
</dbReference>
<dbReference type="NCBIfam" id="NF000940">
    <property type="entry name" value="PRK00094.1-2"/>
    <property type="match status" value="1"/>
</dbReference>
<dbReference type="NCBIfam" id="NF000941">
    <property type="entry name" value="PRK00094.1-3"/>
    <property type="match status" value="1"/>
</dbReference>
<dbReference type="NCBIfam" id="NF000942">
    <property type="entry name" value="PRK00094.1-4"/>
    <property type="match status" value="1"/>
</dbReference>
<dbReference type="PANTHER" id="PTHR11728">
    <property type="entry name" value="GLYCEROL-3-PHOSPHATE DEHYDROGENASE"/>
    <property type="match status" value="1"/>
</dbReference>
<dbReference type="PANTHER" id="PTHR11728:SF1">
    <property type="entry name" value="GLYCEROL-3-PHOSPHATE DEHYDROGENASE [NAD(+)] 2, CHLOROPLASTIC"/>
    <property type="match status" value="1"/>
</dbReference>
<dbReference type="Pfam" id="PF07479">
    <property type="entry name" value="NAD_Gly3P_dh_C"/>
    <property type="match status" value="1"/>
</dbReference>
<dbReference type="Pfam" id="PF01210">
    <property type="entry name" value="NAD_Gly3P_dh_N"/>
    <property type="match status" value="1"/>
</dbReference>
<dbReference type="PIRSF" id="PIRSF000114">
    <property type="entry name" value="Glycerol-3-P_dh"/>
    <property type="match status" value="1"/>
</dbReference>
<dbReference type="PRINTS" id="PR00077">
    <property type="entry name" value="GPDHDRGNASE"/>
</dbReference>
<dbReference type="SUPFAM" id="SSF48179">
    <property type="entry name" value="6-phosphogluconate dehydrogenase C-terminal domain-like"/>
    <property type="match status" value="1"/>
</dbReference>
<dbReference type="SUPFAM" id="SSF51735">
    <property type="entry name" value="NAD(P)-binding Rossmann-fold domains"/>
    <property type="match status" value="1"/>
</dbReference>
<dbReference type="PROSITE" id="PS00957">
    <property type="entry name" value="NAD_G3PDH"/>
    <property type="match status" value="1"/>
</dbReference>
<proteinExistence type="inferred from homology"/>
<protein>
    <recommendedName>
        <fullName evidence="1">Glycerol-3-phosphate dehydrogenase [NAD(P)+]</fullName>
        <ecNumber evidence="1">1.1.1.94</ecNumber>
    </recommendedName>
    <alternativeName>
        <fullName evidence="1">NAD(P)(+)-dependent glycerol-3-phosphate dehydrogenase</fullName>
    </alternativeName>
    <alternativeName>
        <fullName evidence="1">NAD(P)H-dependent dihydroxyacetone-phosphate reductase</fullName>
    </alternativeName>
</protein>
<accession>A3CQT0</accession>
<evidence type="ECO:0000255" key="1">
    <source>
        <dbReference type="HAMAP-Rule" id="MF_00394"/>
    </source>
</evidence>
<keyword id="KW-0963">Cytoplasm</keyword>
<keyword id="KW-0444">Lipid biosynthesis</keyword>
<keyword id="KW-0443">Lipid metabolism</keyword>
<keyword id="KW-0520">NAD</keyword>
<keyword id="KW-0521">NADP</keyword>
<keyword id="KW-0547">Nucleotide-binding</keyword>
<keyword id="KW-0560">Oxidoreductase</keyword>
<keyword id="KW-0594">Phospholipid biosynthesis</keyword>
<keyword id="KW-1208">Phospholipid metabolism</keyword>
<keyword id="KW-1185">Reference proteome</keyword>
<reference key="1">
    <citation type="journal article" date="2007" name="J. Bacteriol.">
        <title>Genome of the opportunistic pathogen Streptococcus sanguinis.</title>
        <authorList>
            <person name="Xu P."/>
            <person name="Alves J.M."/>
            <person name="Kitten T."/>
            <person name="Brown A."/>
            <person name="Chen Z."/>
            <person name="Ozaki L.S."/>
            <person name="Manque P."/>
            <person name="Ge X."/>
            <person name="Serrano M.G."/>
            <person name="Puiu D."/>
            <person name="Hendricks S."/>
            <person name="Wang Y."/>
            <person name="Chaplin M.D."/>
            <person name="Akan D."/>
            <person name="Paik S."/>
            <person name="Peterson D.L."/>
            <person name="Macrina F.L."/>
            <person name="Buck G.A."/>
        </authorList>
    </citation>
    <scope>NUCLEOTIDE SEQUENCE [LARGE SCALE GENOMIC DNA]</scope>
    <source>
        <strain>SK36</strain>
    </source>
</reference>
<name>GPDA_STRSV</name>
<comment type="function">
    <text evidence="1">Catalyzes the reduction of the glycolytic intermediate dihydroxyacetone phosphate (DHAP) to sn-glycerol 3-phosphate (G3P), the key precursor for phospholipid synthesis.</text>
</comment>
<comment type="catalytic activity">
    <reaction evidence="1">
        <text>sn-glycerol 3-phosphate + NAD(+) = dihydroxyacetone phosphate + NADH + H(+)</text>
        <dbReference type="Rhea" id="RHEA:11092"/>
        <dbReference type="ChEBI" id="CHEBI:15378"/>
        <dbReference type="ChEBI" id="CHEBI:57540"/>
        <dbReference type="ChEBI" id="CHEBI:57597"/>
        <dbReference type="ChEBI" id="CHEBI:57642"/>
        <dbReference type="ChEBI" id="CHEBI:57945"/>
        <dbReference type="EC" id="1.1.1.94"/>
    </reaction>
    <physiologicalReaction direction="right-to-left" evidence="1">
        <dbReference type="Rhea" id="RHEA:11094"/>
    </physiologicalReaction>
</comment>
<comment type="catalytic activity">
    <reaction evidence="1">
        <text>sn-glycerol 3-phosphate + NADP(+) = dihydroxyacetone phosphate + NADPH + H(+)</text>
        <dbReference type="Rhea" id="RHEA:11096"/>
        <dbReference type="ChEBI" id="CHEBI:15378"/>
        <dbReference type="ChEBI" id="CHEBI:57597"/>
        <dbReference type="ChEBI" id="CHEBI:57642"/>
        <dbReference type="ChEBI" id="CHEBI:57783"/>
        <dbReference type="ChEBI" id="CHEBI:58349"/>
        <dbReference type="EC" id="1.1.1.94"/>
    </reaction>
    <physiologicalReaction direction="right-to-left" evidence="1">
        <dbReference type="Rhea" id="RHEA:11098"/>
    </physiologicalReaction>
</comment>
<comment type="pathway">
    <text evidence="1">Membrane lipid metabolism; glycerophospholipid metabolism.</text>
</comment>
<comment type="subcellular location">
    <subcellularLocation>
        <location evidence="1">Cytoplasm</location>
    </subcellularLocation>
</comment>
<comment type="similarity">
    <text evidence="1">Belongs to the NAD-dependent glycerol-3-phosphate dehydrogenase family.</text>
</comment>
<organism>
    <name type="scientific">Streptococcus sanguinis (strain SK36)</name>
    <dbReference type="NCBI Taxonomy" id="388919"/>
    <lineage>
        <taxon>Bacteria</taxon>
        <taxon>Bacillati</taxon>
        <taxon>Bacillota</taxon>
        <taxon>Bacilli</taxon>
        <taxon>Lactobacillales</taxon>
        <taxon>Streptococcaceae</taxon>
        <taxon>Streptococcus</taxon>
    </lineage>
</organism>
<gene>
    <name evidence="1" type="primary">gpsA</name>
    <name type="ordered locus">SSA_2168</name>
</gene>
<sequence length="340" mass="37343">MDKQRVAVIGPGSWGTALSQVLNDNGHEVRIWGNIAEQINEINDEHTNKRYFKDIVLDEKIKAYHDLEEALKDADAVLFVVPTKVTRLVAKQVAQALDHKVKIMHASKGLEPNTHERISTILEEEIPAELRSEIVVVSGPSHAEETIVRDITLITAASKDLETAKYVQELFSNHYFRLYTNTDVIGVETAGALKNIIAVGAGALHGLGYGDNAKAAIITRGLAEITRLGVKLGANPLTYSGLSGVGDLIVTGTSVHSRNWRAGNALGRGEKLADIEANMGMVIEGISTTKAAYELAQELDVYMPITQAIYKVIYQNCNIKEAIYEIMNNEFKAENEWTSF</sequence>
<feature type="chain" id="PRO_1000049562" description="Glycerol-3-phosphate dehydrogenase [NAD(P)+]">
    <location>
        <begin position="1"/>
        <end position="340"/>
    </location>
</feature>
<feature type="active site" description="Proton acceptor" evidence="1">
    <location>
        <position position="194"/>
    </location>
</feature>
<feature type="binding site" evidence="1">
    <location>
        <position position="13"/>
    </location>
    <ligand>
        <name>NADPH</name>
        <dbReference type="ChEBI" id="CHEBI:57783"/>
    </ligand>
</feature>
<feature type="binding site" evidence="1">
    <location>
        <position position="14"/>
    </location>
    <ligand>
        <name>NADPH</name>
        <dbReference type="ChEBI" id="CHEBI:57783"/>
    </ligand>
</feature>
<feature type="binding site" evidence="1">
    <location>
        <position position="108"/>
    </location>
    <ligand>
        <name>NADPH</name>
        <dbReference type="ChEBI" id="CHEBI:57783"/>
    </ligand>
</feature>
<feature type="binding site" evidence="1">
    <location>
        <position position="108"/>
    </location>
    <ligand>
        <name>sn-glycerol 3-phosphate</name>
        <dbReference type="ChEBI" id="CHEBI:57597"/>
    </ligand>
</feature>
<feature type="binding site" evidence="1">
    <location>
        <position position="139"/>
    </location>
    <ligand>
        <name>sn-glycerol 3-phosphate</name>
        <dbReference type="ChEBI" id="CHEBI:57597"/>
    </ligand>
</feature>
<feature type="binding site" evidence="1">
    <location>
        <position position="141"/>
    </location>
    <ligand>
        <name>sn-glycerol 3-phosphate</name>
        <dbReference type="ChEBI" id="CHEBI:57597"/>
    </ligand>
</feature>
<feature type="binding site" evidence="1">
    <location>
        <position position="143"/>
    </location>
    <ligand>
        <name>NADPH</name>
        <dbReference type="ChEBI" id="CHEBI:57783"/>
    </ligand>
</feature>
<feature type="binding site" evidence="1">
    <location>
        <position position="194"/>
    </location>
    <ligand>
        <name>sn-glycerol 3-phosphate</name>
        <dbReference type="ChEBI" id="CHEBI:57597"/>
    </ligand>
</feature>
<feature type="binding site" evidence="1">
    <location>
        <position position="247"/>
    </location>
    <ligand>
        <name>sn-glycerol 3-phosphate</name>
        <dbReference type="ChEBI" id="CHEBI:57597"/>
    </ligand>
</feature>
<feature type="binding site" evidence="1">
    <location>
        <position position="257"/>
    </location>
    <ligand>
        <name>sn-glycerol 3-phosphate</name>
        <dbReference type="ChEBI" id="CHEBI:57597"/>
    </ligand>
</feature>
<feature type="binding site" evidence="1">
    <location>
        <position position="258"/>
    </location>
    <ligand>
        <name>NADPH</name>
        <dbReference type="ChEBI" id="CHEBI:57783"/>
    </ligand>
</feature>
<feature type="binding site" evidence="1">
    <location>
        <position position="258"/>
    </location>
    <ligand>
        <name>sn-glycerol 3-phosphate</name>
        <dbReference type="ChEBI" id="CHEBI:57597"/>
    </ligand>
</feature>
<feature type="binding site" evidence="1">
    <location>
        <position position="259"/>
    </location>
    <ligand>
        <name>sn-glycerol 3-phosphate</name>
        <dbReference type="ChEBI" id="CHEBI:57597"/>
    </ligand>
</feature>
<feature type="binding site" evidence="1">
    <location>
        <position position="282"/>
    </location>
    <ligand>
        <name>NADPH</name>
        <dbReference type="ChEBI" id="CHEBI:57783"/>
    </ligand>
</feature>
<feature type="binding site" evidence="1">
    <location>
        <position position="284"/>
    </location>
    <ligand>
        <name>NADPH</name>
        <dbReference type="ChEBI" id="CHEBI:57783"/>
    </ligand>
</feature>